<gene>
    <name evidence="1" type="primary">deoB</name>
    <name type="ordered locus">LMOf2365_1984</name>
</gene>
<organism>
    <name type="scientific">Listeria monocytogenes serotype 4b (strain F2365)</name>
    <dbReference type="NCBI Taxonomy" id="265669"/>
    <lineage>
        <taxon>Bacteria</taxon>
        <taxon>Bacillati</taxon>
        <taxon>Bacillota</taxon>
        <taxon>Bacilli</taxon>
        <taxon>Bacillales</taxon>
        <taxon>Listeriaceae</taxon>
        <taxon>Listeria</taxon>
    </lineage>
</organism>
<protein>
    <recommendedName>
        <fullName evidence="1">Phosphopentomutase</fullName>
        <ecNumber evidence="1">5.4.2.7</ecNumber>
    </recommendedName>
    <alternativeName>
        <fullName evidence="1">Phosphodeoxyribomutase</fullName>
    </alternativeName>
</protein>
<evidence type="ECO:0000255" key="1">
    <source>
        <dbReference type="HAMAP-Rule" id="MF_00740"/>
    </source>
</evidence>
<reference key="1">
    <citation type="journal article" date="2004" name="Nucleic Acids Res.">
        <title>Whole genome comparisons of serotype 4b and 1/2a strains of the food-borne pathogen Listeria monocytogenes reveal new insights into the core genome components of this species.</title>
        <authorList>
            <person name="Nelson K.E."/>
            <person name="Fouts D.E."/>
            <person name="Mongodin E.F."/>
            <person name="Ravel J."/>
            <person name="DeBoy R.T."/>
            <person name="Kolonay J.F."/>
            <person name="Rasko D.A."/>
            <person name="Angiuoli S.V."/>
            <person name="Gill S.R."/>
            <person name="Paulsen I.T."/>
            <person name="Peterson J.D."/>
            <person name="White O."/>
            <person name="Nelson W.C."/>
            <person name="Nierman W.C."/>
            <person name="Beanan M.J."/>
            <person name="Brinkac L.M."/>
            <person name="Daugherty S.C."/>
            <person name="Dodson R.J."/>
            <person name="Durkin A.S."/>
            <person name="Madupu R."/>
            <person name="Haft D.H."/>
            <person name="Selengut J."/>
            <person name="Van Aken S.E."/>
            <person name="Khouri H.M."/>
            <person name="Fedorova N."/>
            <person name="Forberger H.A."/>
            <person name="Tran B."/>
            <person name="Kathariou S."/>
            <person name="Wonderling L.D."/>
            <person name="Uhlich G.A."/>
            <person name="Bayles D.O."/>
            <person name="Luchansky J.B."/>
            <person name="Fraser C.M."/>
        </authorList>
    </citation>
    <scope>NUCLEOTIDE SEQUENCE [LARGE SCALE GENOMIC DNA]</scope>
    <source>
        <strain>F2365</strain>
    </source>
</reference>
<proteinExistence type="inferred from homology"/>
<name>DEOB_LISMF</name>
<keyword id="KW-0963">Cytoplasm</keyword>
<keyword id="KW-0413">Isomerase</keyword>
<keyword id="KW-0464">Manganese</keyword>
<keyword id="KW-0479">Metal-binding</keyword>
<accession>Q71Y60</accession>
<feature type="chain" id="PRO_0000199828" description="Phosphopentomutase">
    <location>
        <begin position="1"/>
        <end position="394"/>
    </location>
</feature>
<feature type="binding site" evidence="1">
    <location>
        <position position="14"/>
    </location>
    <ligand>
        <name>Mn(2+)</name>
        <dbReference type="ChEBI" id="CHEBI:29035"/>
        <label>1</label>
    </ligand>
</feature>
<feature type="binding site" evidence="1">
    <location>
        <position position="287"/>
    </location>
    <ligand>
        <name>Mn(2+)</name>
        <dbReference type="ChEBI" id="CHEBI:29035"/>
        <label>2</label>
    </ligand>
</feature>
<feature type="binding site" evidence="1">
    <location>
        <position position="292"/>
    </location>
    <ligand>
        <name>Mn(2+)</name>
        <dbReference type="ChEBI" id="CHEBI:29035"/>
        <label>2</label>
    </ligand>
</feature>
<feature type="binding site" evidence="1">
    <location>
        <position position="328"/>
    </location>
    <ligand>
        <name>Mn(2+)</name>
        <dbReference type="ChEBI" id="CHEBI:29035"/>
        <label>1</label>
    </ligand>
</feature>
<feature type="binding site" evidence="1">
    <location>
        <position position="329"/>
    </location>
    <ligand>
        <name>Mn(2+)</name>
        <dbReference type="ChEBI" id="CHEBI:29035"/>
        <label>1</label>
    </ligand>
</feature>
<feature type="binding site" evidence="1">
    <location>
        <position position="340"/>
    </location>
    <ligand>
        <name>Mn(2+)</name>
        <dbReference type="ChEBI" id="CHEBI:29035"/>
        <label>2</label>
    </ligand>
</feature>
<dbReference type="EC" id="5.4.2.7" evidence="1"/>
<dbReference type="EMBL" id="AE017262">
    <property type="protein sequence ID" value="AAT04754.1"/>
    <property type="molecule type" value="Genomic_DNA"/>
</dbReference>
<dbReference type="RefSeq" id="WP_003725942.1">
    <property type="nucleotide sequence ID" value="NC_002973.6"/>
</dbReference>
<dbReference type="SMR" id="Q71Y60"/>
<dbReference type="KEGG" id="lmf:LMOf2365_1984"/>
<dbReference type="HOGENOM" id="CLU_053861_0_0_9"/>
<dbReference type="UniPathway" id="UPA00002">
    <property type="reaction ID" value="UER00467"/>
</dbReference>
<dbReference type="GO" id="GO:0005829">
    <property type="term" value="C:cytosol"/>
    <property type="evidence" value="ECO:0007669"/>
    <property type="project" value="TreeGrafter"/>
</dbReference>
<dbReference type="GO" id="GO:0000287">
    <property type="term" value="F:magnesium ion binding"/>
    <property type="evidence" value="ECO:0007669"/>
    <property type="project" value="InterPro"/>
</dbReference>
<dbReference type="GO" id="GO:0030145">
    <property type="term" value="F:manganese ion binding"/>
    <property type="evidence" value="ECO:0007669"/>
    <property type="project" value="UniProtKB-UniRule"/>
</dbReference>
<dbReference type="GO" id="GO:0008973">
    <property type="term" value="F:phosphopentomutase activity"/>
    <property type="evidence" value="ECO:0007669"/>
    <property type="project" value="UniProtKB-UniRule"/>
</dbReference>
<dbReference type="GO" id="GO:0006018">
    <property type="term" value="P:2-deoxyribose 1-phosphate catabolic process"/>
    <property type="evidence" value="ECO:0007669"/>
    <property type="project" value="UniProtKB-UniRule"/>
</dbReference>
<dbReference type="GO" id="GO:0006015">
    <property type="term" value="P:5-phosphoribose 1-diphosphate biosynthetic process"/>
    <property type="evidence" value="ECO:0007669"/>
    <property type="project" value="UniProtKB-UniPathway"/>
</dbReference>
<dbReference type="GO" id="GO:0043094">
    <property type="term" value="P:metabolic compound salvage"/>
    <property type="evidence" value="ECO:0007669"/>
    <property type="project" value="InterPro"/>
</dbReference>
<dbReference type="GO" id="GO:0009117">
    <property type="term" value="P:nucleotide metabolic process"/>
    <property type="evidence" value="ECO:0007669"/>
    <property type="project" value="InterPro"/>
</dbReference>
<dbReference type="CDD" id="cd16009">
    <property type="entry name" value="PPM"/>
    <property type="match status" value="1"/>
</dbReference>
<dbReference type="FunFam" id="3.30.70.1250:FF:000001">
    <property type="entry name" value="Phosphopentomutase"/>
    <property type="match status" value="1"/>
</dbReference>
<dbReference type="Gene3D" id="3.40.720.10">
    <property type="entry name" value="Alkaline Phosphatase, subunit A"/>
    <property type="match status" value="1"/>
</dbReference>
<dbReference type="Gene3D" id="3.30.70.1250">
    <property type="entry name" value="Phosphopentomutase"/>
    <property type="match status" value="1"/>
</dbReference>
<dbReference type="HAMAP" id="MF_00740">
    <property type="entry name" value="Phosphopentomut"/>
    <property type="match status" value="1"/>
</dbReference>
<dbReference type="InterPro" id="IPR017850">
    <property type="entry name" value="Alkaline_phosphatase_core_sf"/>
</dbReference>
<dbReference type="InterPro" id="IPR010045">
    <property type="entry name" value="DeoB"/>
</dbReference>
<dbReference type="InterPro" id="IPR006124">
    <property type="entry name" value="Metalloenzyme"/>
</dbReference>
<dbReference type="InterPro" id="IPR024052">
    <property type="entry name" value="Phosphopentomutase_DeoB_cap_sf"/>
</dbReference>
<dbReference type="NCBIfam" id="TIGR01696">
    <property type="entry name" value="deoB"/>
    <property type="match status" value="1"/>
</dbReference>
<dbReference type="NCBIfam" id="NF003766">
    <property type="entry name" value="PRK05362.1"/>
    <property type="match status" value="1"/>
</dbReference>
<dbReference type="PANTHER" id="PTHR21110">
    <property type="entry name" value="PHOSPHOPENTOMUTASE"/>
    <property type="match status" value="1"/>
</dbReference>
<dbReference type="PANTHER" id="PTHR21110:SF0">
    <property type="entry name" value="PHOSPHOPENTOMUTASE"/>
    <property type="match status" value="1"/>
</dbReference>
<dbReference type="Pfam" id="PF01676">
    <property type="entry name" value="Metalloenzyme"/>
    <property type="match status" value="1"/>
</dbReference>
<dbReference type="PIRSF" id="PIRSF001491">
    <property type="entry name" value="Ppentomutase"/>
    <property type="match status" value="1"/>
</dbReference>
<dbReference type="SUPFAM" id="SSF53649">
    <property type="entry name" value="Alkaline phosphatase-like"/>
    <property type="match status" value="1"/>
</dbReference>
<dbReference type="SUPFAM" id="SSF143856">
    <property type="entry name" value="DeoB insert domain-like"/>
    <property type="match status" value="1"/>
</dbReference>
<comment type="function">
    <text evidence="1">Isomerase that catalyzes the conversion of deoxy-ribose 1-phosphate (dRib-1-P) and ribose 1-phosphate (Rib-1-P) to deoxy-ribose 5-phosphate (dRib-5-P) and ribose 5-phosphate (Rib-5-P), respectively.</text>
</comment>
<comment type="catalytic activity">
    <reaction evidence="1">
        <text>2-deoxy-alpha-D-ribose 1-phosphate = 2-deoxy-D-ribose 5-phosphate</text>
        <dbReference type="Rhea" id="RHEA:27658"/>
        <dbReference type="ChEBI" id="CHEBI:57259"/>
        <dbReference type="ChEBI" id="CHEBI:62877"/>
        <dbReference type="EC" id="5.4.2.7"/>
    </reaction>
</comment>
<comment type="catalytic activity">
    <reaction evidence="1">
        <text>alpha-D-ribose 1-phosphate = D-ribose 5-phosphate</text>
        <dbReference type="Rhea" id="RHEA:18793"/>
        <dbReference type="ChEBI" id="CHEBI:57720"/>
        <dbReference type="ChEBI" id="CHEBI:78346"/>
        <dbReference type="EC" id="5.4.2.7"/>
    </reaction>
</comment>
<comment type="cofactor">
    <cofactor evidence="1">
        <name>Mn(2+)</name>
        <dbReference type="ChEBI" id="CHEBI:29035"/>
    </cofactor>
    <text evidence="1">Binds 2 manganese ions.</text>
</comment>
<comment type="pathway">
    <text evidence="1">Carbohydrate degradation; 2-deoxy-D-ribose 1-phosphate degradation; D-glyceraldehyde 3-phosphate and acetaldehyde from 2-deoxy-alpha-D-ribose 1-phosphate: step 1/2.</text>
</comment>
<comment type="subcellular location">
    <subcellularLocation>
        <location evidence="1">Cytoplasm</location>
    </subcellularLocation>
</comment>
<comment type="similarity">
    <text evidence="1">Belongs to the phosphopentomutase family.</text>
</comment>
<sequence length="394" mass="43704">MPDKFKRVHVVVMDSVGIGEAPDAAKFGDFDVDTFGHIAKHVGGLKMPEMGKLGLSNIREIDGIKKAEKPLAYYTKMQEASNGKDTMTGHWEIMGLYIDTPFRVFPDGFPDDLINQIEEKTGRKVIGNKPASGTEIMAELGEEHVKTGALIVYTSADSVLQIAAHEDVVPLEELYEICEFCRKITLDDPYMLGRIIARPFVGEPGAFVRTPNRHDYALKPFKPTVMDALKDGGKDVIAIGKISDIFDGEGVTESIRTKSNMDGMDQFIAVLDKDFNGMSFLNLVDFDALFGHRRDPQGYADALVDFDGRLVEVMEKLTDDDLLIITADHGNDPTYSGTDHTREFVPLLVYSPRFKNGGSELELRKTFADLGATVADNFEVKMPEYGTSFLKDLK</sequence>